<reference key="1">
    <citation type="journal article" date="2005" name="Science">
        <title>The transcriptional landscape of the mammalian genome.</title>
        <authorList>
            <person name="Carninci P."/>
            <person name="Kasukawa T."/>
            <person name="Katayama S."/>
            <person name="Gough J."/>
            <person name="Frith M.C."/>
            <person name="Maeda N."/>
            <person name="Oyama R."/>
            <person name="Ravasi T."/>
            <person name="Lenhard B."/>
            <person name="Wells C."/>
            <person name="Kodzius R."/>
            <person name="Shimokawa K."/>
            <person name="Bajic V.B."/>
            <person name="Brenner S.E."/>
            <person name="Batalov S."/>
            <person name="Forrest A.R."/>
            <person name="Zavolan M."/>
            <person name="Davis M.J."/>
            <person name="Wilming L.G."/>
            <person name="Aidinis V."/>
            <person name="Allen J.E."/>
            <person name="Ambesi-Impiombato A."/>
            <person name="Apweiler R."/>
            <person name="Aturaliya R.N."/>
            <person name="Bailey T.L."/>
            <person name="Bansal M."/>
            <person name="Baxter L."/>
            <person name="Beisel K.W."/>
            <person name="Bersano T."/>
            <person name="Bono H."/>
            <person name="Chalk A.M."/>
            <person name="Chiu K.P."/>
            <person name="Choudhary V."/>
            <person name="Christoffels A."/>
            <person name="Clutterbuck D.R."/>
            <person name="Crowe M.L."/>
            <person name="Dalla E."/>
            <person name="Dalrymple B.P."/>
            <person name="de Bono B."/>
            <person name="Della Gatta G."/>
            <person name="di Bernardo D."/>
            <person name="Down T."/>
            <person name="Engstrom P."/>
            <person name="Fagiolini M."/>
            <person name="Faulkner G."/>
            <person name="Fletcher C.F."/>
            <person name="Fukushima T."/>
            <person name="Furuno M."/>
            <person name="Futaki S."/>
            <person name="Gariboldi M."/>
            <person name="Georgii-Hemming P."/>
            <person name="Gingeras T.R."/>
            <person name="Gojobori T."/>
            <person name="Green R.E."/>
            <person name="Gustincich S."/>
            <person name="Harbers M."/>
            <person name="Hayashi Y."/>
            <person name="Hensch T.K."/>
            <person name="Hirokawa N."/>
            <person name="Hill D."/>
            <person name="Huminiecki L."/>
            <person name="Iacono M."/>
            <person name="Ikeo K."/>
            <person name="Iwama A."/>
            <person name="Ishikawa T."/>
            <person name="Jakt M."/>
            <person name="Kanapin A."/>
            <person name="Katoh M."/>
            <person name="Kawasawa Y."/>
            <person name="Kelso J."/>
            <person name="Kitamura H."/>
            <person name="Kitano H."/>
            <person name="Kollias G."/>
            <person name="Krishnan S.P."/>
            <person name="Kruger A."/>
            <person name="Kummerfeld S.K."/>
            <person name="Kurochkin I.V."/>
            <person name="Lareau L.F."/>
            <person name="Lazarevic D."/>
            <person name="Lipovich L."/>
            <person name="Liu J."/>
            <person name="Liuni S."/>
            <person name="McWilliam S."/>
            <person name="Madan Babu M."/>
            <person name="Madera M."/>
            <person name="Marchionni L."/>
            <person name="Matsuda H."/>
            <person name="Matsuzawa S."/>
            <person name="Miki H."/>
            <person name="Mignone F."/>
            <person name="Miyake S."/>
            <person name="Morris K."/>
            <person name="Mottagui-Tabar S."/>
            <person name="Mulder N."/>
            <person name="Nakano N."/>
            <person name="Nakauchi H."/>
            <person name="Ng P."/>
            <person name="Nilsson R."/>
            <person name="Nishiguchi S."/>
            <person name="Nishikawa S."/>
            <person name="Nori F."/>
            <person name="Ohara O."/>
            <person name="Okazaki Y."/>
            <person name="Orlando V."/>
            <person name="Pang K.C."/>
            <person name="Pavan W.J."/>
            <person name="Pavesi G."/>
            <person name="Pesole G."/>
            <person name="Petrovsky N."/>
            <person name="Piazza S."/>
            <person name="Reed J."/>
            <person name="Reid J.F."/>
            <person name="Ring B.Z."/>
            <person name="Ringwald M."/>
            <person name="Rost B."/>
            <person name="Ruan Y."/>
            <person name="Salzberg S.L."/>
            <person name="Sandelin A."/>
            <person name="Schneider C."/>
            <person name="Schoenbach C."/>
            <person name="Sekiguchi K."/>
            <person name="Semple C.A."/>
            <person name="Seno S."/>
            <person name="Sessa L."/>
            <person name="Sheng Y."/>
            <person name="Shibata Y."/>
            <person name="Shimada H."/>
            <person name="Shimada K."/>
            <person name="Silva D."/>
            <person name="Sinclair B."/>
            <person name="Sperling S."/>
            <person name="Stupka E."/>
            <person name="Sugiura K."/>
            <person name="Sultana R."/>
            <person name="Takenaka Y."/>
            <person name="Taki K."/>
            <person name="Tammoja K."/>
            <person name="Tan S.L."/>
            <person name="Tang S."/>
            <person name="Taylor M.S."/>
            <person name="Tegner J."/>
            <person name="Teichmann S.A."/>
            <person name="Ueda H.R."/>
            <person name="van Nimwegen E."/>
            <person name="Verardo R."/>
            <person name="Wei C.L."/>
            <person name="Yagi K."/>
            <person name="Yamanishi H."/>
            <person name="Zabarovsky E."/>
            <person name="Zhu S."/>
            <person name="Zimmer A."/>
            <person name="Hide W."/>
            <person name="Bult C."/>
            <person name="Grimmond S.M."/>
            <person name="Teasdale R.D."/>
            <person name="Liu E.T."/>
            <person name="Brusic V."/>
            <person name="Quackenbush J."/>
            <person name="Wahlestedt C."/>
            <person name="Mattick J.S."/>
            <person name="Hume D.A."/>
            <person name="Kai C."/>
            <person name="Sasaki D."/>
            <person name="Tomaru Y."/>
            <person name="Fukuda S."/>
            <person name="Kanamori-Katayama M."/>
            <person name="Suzuki M."/>
            <person name="Aoki J."/>
            <person name="Arakawa T."/>
            <person name="Iida J."/>
            <person name="Imamura K."/>
            <person name="Itoh M."/>
            <person name="Kato T."/>
            <person name="Kawaji H."/>
            <person name="Kawagashira N."/>
            <person name="Kawashima T."/>
            <person name="Kojima M."/>
            <person name="Kondo S."/>
            <person name="Konno H."/>
            <person name="Nakano K."/>
            <person name="Ninomiya N."/>
            <person name="Nishio T."/>
            <person name="Okada M."/>
            <person name="Plessy C."/>
            <person name="Shibata K."/>
            <person name="Shiraki T."/>
            <person name="Suzuki S."/>
            <person name="Tagami M."/>
            <person name="Waki K."/>
            <person name="Watahiki A."/>
            <person name="Okamura-Oho Y."/>
            <person name="Suzuki H."/>
            <person name="Kawai J."/>
            <person name="Hayashizaki Y."/>
        </authorList>
    </citation>
    <scope>NUCLEOTIDE SEQUENCE [LARGE SCALE MRNA] (ISOFORMS 1 AND 2)</scope>
    <source>
        <strain>C57BL/6J</strain>
        <strain>NOD</strain>
    </source>
</reference>
<reference key="2">
    <citation type="journal article" date="2009" name="PLoS Biol.">
        <title>Lineage-specific biology revealed by a finished genome assembly of the mouse.</title>
        <authorList>
            <person name="Church D.M."/>
            <person name="Goodstadt L."/>
            <person name="Hillier L.W."/>
            <person name="Zody M.C."/>
            <person name="Goldstein S."/>
            <person name="She X."/>
            <person name="Bult C.J."/>
            <person name="Agarwala R."/>
            <person name="Cherry J.L."/>
            <person name="DiCuccio M."/>
            <person name="Hlavina W."/>
            <person name="Kapustin Y."/>
            <person name="Meric P."/>
            <person name="Maglott D."/>
            <person name="Birtle Z."/>
            <person name="Marques A.C."/>
            <person name="Graves T."/>
            <person name="Zhou S."/>
            <person name="Teague B."/>
            <person name="Potamousis K."/>
            <person name="Churas C."/>
            <person name="Place M."/>
            <person name="Herschleb J."/>
            <person name="Runnheim R."/>
            <person name="Forrest D."/>
            <person name="Amos-Landgraf J."/>
            <person name="Schwartz D.C."/>
            <person name="Cheng Z."/>
            <person name="Lindblad-Toh K."/>
            <person name="Eichler E.E."/>
            <person name="Ponting C.P."/>
        </authorList>
    </citation>
    <scope>NUCLEOTIDE SEQUENCE [LARGE SCALE GENOMIC DNA]</scope>
    <source>
        <strain>C57BL/6J</strain>
    </source>
</reference>
<reference key="3">
    <citation type="journal article" date="2004" name="Genome Res.">
        <title>The status, quality, and expansion of the NIH full-length cDNA project: the Mammalian Gene Collection (MGC).</title>
        <authorList>
            <consortium name="The MGC Project Team"/>
        </authorList>
    </citation>
    <scope>NUCLEOTIDE SEQUENCE [LARGE SCALE MRNA] (ISOFORM 1)</scope>
    <source>
        <tissue>Mammary tumor</tissue>
    </source>
</reference>
<reference key="4">
    <citation type="journal article" date="2008" name="Mol. Biol. Cell">
        <title>The interaction of JRAB/MICAL-L2 with Rab8 and Rab13 coordinates the assembly of tight junctions and adherens junctions.</title>
        <authorList>
            <person name="Yamamura R."/>
            <person name="Nishimura N."/>
            <person name="Nakatsuji H."/>
            <person name="Arase S."/>
            <person name="Sasaki T."/>
        </authorList>
    </citation>
    <scope>INTERACTION WITH RAB8A</scope>
</reference>
<reference key="5">
    <citation type="journal article" date="2010" name="Cell">
        <title>A tissue-specific atlas of mouse protein phosphorylation and expression.</title>
        <authorList>
            <person name="Huttlin E.L."/>
            <person name="Jedrychowski M.P."/>
            <person name="Elias J.E."/>
            <person name="Goswami T."/>
            <person name="Rad R."/>
            <person name="Beausoleil S.A."/>
            <person name="Villen J."/>
            <person name="Haas W."/>
            <person name="Sowa M.E."/>
            <person name="Gygi S.P."/>
        </authorList>
    </citation>
    <scope>PHOSPHORYLATION [LARGE SCALE ANALYSIS] AT SER-777 AND SER-781</scope>
    <scope>IDENTIFICATION BY MASS SPECTROMETRY [LARGE SCALE ANALYSIS]</scope>
    <source>
        <tissue>Brain</tissue>
        <tissue>Heart</tissue>
        <tissue>Lung</tissue>
        <tissue>Pancreas</tissue>
        <tissue>Spleen</tissue>
    </source>
</reference>
<reference key="6">
    <citation type="journal article" date="2011" name="Mol. Cell. Biol.">
        <title>MICAL-1 is a negative regulator of MST-NDR kinase signaling and apoptosis.</title>
        <authorList>
            <person name="Zhou Y."/>
            <person name="Adolfs Y."/>
            <person name="Pijnappel W.W."/>
            <person name="Fuller S.J."/>
            <person name="Van der Schors R.C."/>
            <person name="Li K.W."/>
            <person name="Sugden P.H."/>
            <person name="Smit A.B."/>
            <person name="Hergovich A."/>
            <person name="Pasterkamp R.J."/>
        </authorList>
    </citation>
    <scope>FUNCTION</scope>
    <scope>INTERACTION WITH STK38 AND STK38L</scope>
</reference>
<reference key="7">
    <citation type="journal article" date="2013" name="Mol. Cell">
        <title>MsrB1 and MICALs regulate actin assembly and macrophage function via reversible stereoselective methionine oxidation.</title>
        <authorList>
            <person name="Lee B.C."/>
            <person name="Peterfi Z."/>
            <person name="Hoffmann F.W."/>
            <person name="Moore R.E."/>
            <person name="Kaya A."/>
            <person name="Avanesov A."/>
            <person name="Tarrago L."/>
            <person name="Zhou Y."/>
            <person name="Weerapana E."/>
            <person name="Fomenko D.E."/>
            <person name="Hoffmann P.R."/>
            <person name="Gladyshev V.N."/>
        </authorList>
    </citation>
    <scope>FUNCTION</scope>
    <scope>CATALYTIC ACTIVITY</scope>
    <scope>CAUTION</scope>
</reference>
<reference key="8">
    <citation type="journal article" date="2014" name="Nat. Commun.">
        <title>The intracellular redox protein MICAL-1 regulates the development of hippocampal mossy fibre connections.</title>
        <authorList>
            <person name="Van Battum E.Y."/>
            <person name="Gunput R.A."/>
            <person name="Lemstra S."/>
            <person name="Groen E.J."/>
            <person name="Yu K.L."/>
            <person name="Adolfs Y."/>
            <person name="Zhou Y."/>
            <person name="Hoogenraad C.C."/>
            <person name="Yoshida Y."/>
            <person name="Schachner M."/>
            <person name="Akhmanova A."/>
            <person name="Pasterkamp R.J."/>
        </authorList>
    </citation>
    <scope>FUNCTION</scope>
    <scope>TISSUE SPECIFICITY</scope>
</reference>
<reference key="9">
    <citation type="journal article" date="2005" name="Proc. Natl. Acad. Sci. U.S.A.">
        <title>High-resolution structure of the catalytic region of MICAL (molecule interacting with CasL), a multidomain flavoenzyme-signaling molecule.</title>
        <authorList>
            <person name="Siebold C."/>
            <person name="Berrow N."/>
            <person name="Walter T.S."/>
            <person name="Harlos K."/>
            <person name="Owens R.J."/>
            <person name="Stuart D.I."/>
            <person name="Terman J.R."/>
            <person name="Kolodkin A.L."/>
            <person name="Pasterkamp R.J."/>
            <person name="Jones E.Y."/>
        </authorList>
    </citation>
    <scope>X-RAY CRYSTALLOGRAPHY (1.45 ANGSTROMS) OF 1-489 IN COMPLEX WITH FAD</scope>
    <scope>COFACTOR</scope>
</reference>
<reference key="10">
    <citation type="journal article" date="2016" name="Sci. Rep.">
        <title>Modulation of MICAL monooxygenase activity by its calponin homology domain: structural and mechanistic insights.</title>
        <authorList>
            <person name="Alqassim S.S."/>
            <person name="Urquiza M."/>
            <person name="Borgnia E."/>
            <person name="Nagib M."/>
            <person name="Amzel L.M."/>
            <person name="Bianchet M.A."/>
        </authorList>
    </citation>
    <scope>X-RAY CRYSTALLOGRAPHY (2.31 ANGSTROMS) OF 2-615 IN COMPLEX WITH FAD</scope>
    <scope>COFACTOR</scope>
    <scope>FUNCTION</scope>
    <scope>CATALYTIC ACTIVITY</scope>
    <scope>BIOPHYSICOCHEMICAL PROPERTIES</scope>
    <scope>CAUTION</scope>
</reference>
<feature type="chain" id="PRO_0000075843" description="[F-actin]-monooxygenase MICAL1">
    <location>
        <begin position="1"/>
        <end position="1048"/>
    </location>
</feature>
<feature type="domain" description="Calponin-homology (CH)" evidence="6">
    <location>
        <begin position="507"/>
        <end position="611"/>
    </location>
</feature>
<feature type="domain" description="LIM zinc-binding" evidence="7">
    <location>
        <begin position="681"/>
        <end position="743"/>
    </location>
</feature>
<feature type="domain" description="bMERB" evidence="8">
    <location>
        <begin position="905"/>
        <end position="1048"/>
    </location>
</feature>
<feature type="region of interest" description="Monooxygenase domain">
    <location>
        <begin position="1"/>
        <end position="489"/>
    </location>
</feature>
<feature type="region of interest" description="Disordered" evidence="9">
    <location>
        <begin position="488"/>
        <end position="508"/>
    </location>
</feature>
<feature type="region of interest" description="Disordered" evidence="9">
    <location>
        <begin position="643"/>
        <end position="676"/>
    </location>
</feature>
<feature type="region of interest" description="Disordered" evidence="9">
    <location>
        <begin position="741"/>
        <end position="787"/>
    </location>
</feature>
<feature type="region of interest" description="Disordered" evidence="9">
    <location>
        <begin position="805"/>
        <end position="825"/>
    </location>
</feature>
<feature type="region of interest" description="Disordered" evidence="9">
    <location>
        <begin position="839"/>
        <end position="873"/>
    </location>
</feature>
<feature type="coiled-coil region" evidence="5">
    <location>
        <begin position="847"/>
        <end position="867"/>
    </location>
</feature>
<feature type="coiled-coil region" evidence="5">
    <location>
        <begin position="906"/>
        <end position="949"/>
    </location>
</feature>
<feature type="coiled-coil region" evidence="5">
    <location>
        <begin position="974"/>
        <end position="1031"/>
    </location>
</feature>
<feature type="compositionally biased region" description="Basic and acidic residues" evidence="9">
    <location>
        <begin position="488"/>
        <end position="502"/>
    </location>
</feature>
<feature type="compositionally biased region" description="Low complexity" evidence="9">
    <location>
        <begin position="654"/>
        <end position="666"/>
    </location>
</feature>
<feature type="compositionally biased region" description="Polar residues" evidence="9">
    <location>
        <begin position="747"/>
        <end position="765"/>
    </location>
</feature>
<feature type="compositionally biased region" description="Low complexity" evidence="9">
    <location>
        <begin position="772"/>
        <end position="787"/>
    </location>
</feature>
<feature type="compositionally biased region" description="Acidic residues" evidence="9">
    <location>
        <begin position="852"/>
        <end position="868"/>
    </location>
</feature>
<feature type="binding site" evidence="10 18 19">
    <location>
        <position position="95"/>
    </location>
    <ligand>
        <name>FAD</name>
        <dbReference type="ChEBI" id="CHEBI:57692"/>
    </ligand>
</feature>
<feature type="binding site" evidence="10 18 19">
    <location>
        <begin position="114"/>
        <end position="116"/>
    </location>
    <ligand>
        <name>FAD</name>
        <dbReference type="ChEBI" id="CHEBI:57692"/>
    </ligand>
</feature>
<feature type="binding site" evidence="10 18 19">
    <location>
        <begin position="121"/>
        <end position="123"/>
    </location>
    <ligand>
        <name>FAD</name>
        <dbReference type="ChEBI" id="CHEBI:57692"/>
    </ligand>
</feature>
<feature type="binding site" evidence="10 18 19">
    <location>
        <position position="181"/>
    </location>
    <ligand>
        <name>FAD</name>
        <dbReference type="ChEBI" id="CHEBI:57692"/>
    </ligand>
</feature>
<feature type="binding site" evidence="10 18 19">
    <location>
        <position position="293"/>
    </location>
    <ligand>
        <name>FAD</name>
        <dbReference type="ChEBI" id="CHEBI:57692"/>
    </ligand>
</feature>
<feature type="binding site" evidence="10 18 19">
    <location>
        <position position="393"/>
    </location>
    <ligand>
        <name>FAD</name>
        <dbReference type="ChEBI" id="CHEBI:57692"/>
    </ligand>
</feature>
<feature type="binding site" evidence="4">
    <location>
        <position position="683"/>
    </location>
    <ligand>
        <name>Zn(2+)</name>
        <dbReference type="ChEBI" id="CHEBI:29105"/>
        <label>1</label>
    </ligand>
</feature>
<feature type="binding site" evidence="4">
    <location>
        <position position="686"/>
    </location>
    <ligand>
        <name>Zn(2+)</name>
        <dbReference type="ChEBI" id="CHEBI:29105"/>
        <label>1</label>
    </ligand>
</feature>
<feature type="binding site" evidence="4">
    <location>
        <position position="704"/>
    </location>
    <ligand>
        <name>Zn(2+)</name>
        <dbReference type="ChEBI" id="CHEBI:29105"/>
        <label>1</label>
    </ligand>
</feature>
<feature type="binding site" evidence="4">
    <location>
        <position position="707"/>
    </location>
    <ligand>
        <name>Zn(2+)</name>
        <dbReference type="ChEBI" id="CHEBI:29105"/>
        <label>1</label>
    </ligand>
</feature>
<feature type="binding site" evidence="4">
    <location>
        <position position="710"/>
    </location>
    <ligand>
        <name>Zn(2+)</name>
        <dbReference type="ChEBI" id="CHEBI:29105"/>
        <label>2</label>
    </ligand>
</feature>
<feature type="binding site" evidence="4">
    <location>
        <position position="713"/>
    </location>
    <ligand>
        <name>Zn(2+)</name>
        <dbReference type="ChEBI" id="CHEBI:29105"/>
        <label>2</label>
    </ligand>
</feature>
<feature type="binding site" evidence="4">
    <location>
        <position position="733"/>
    </location>
    <ligand>
        <name>Zn(2+)</name>
        <dbReference type="ChEBI" id="CHEBI:29105"/>
        <label>2</label>
    </ligand>
</feature>
<feature type="binding site" evidence="4">
    <location>
        <position position="736"/>
    </location>
    <ligand>
        <name>Zn(2+)</name>
        <dbReference type="ChEBI" id="CHEBI:29105"/>
        <label>2</label>
    </ligand>
</feature>
<feature type="site" description="Important for interaction with ARHGAP26 AND ARHGAP10" evidence="4">
    <location>
        <position position="816"/>
    </location>
</feature>
<feature type="modified residue" description="Phosphothreonine" evidence="2">
    <location>
        <position position="475"/>
    </location>
</feature>
<feature type="modified residue" description="Phosphoserine" evidence="4">
    <location>
        <position position="616"/>
    </location>
</feature>
<feature type="modified residue" description="Phosphoserine" evidence="20">
    <location>
        <position position="777"/>
    </location>
</feature>
<feature type="modified residue" description="Phosphoserine" evidence="20">
    <location>
        <position position="781"/>
    </location>
</feature>
<feature type="splice variant" id="VSP_042591" description="In isoform 2." evidence="16">
    <location>
        <begin position="87"/>
        <end position="159"/>
    </location>
</feature>
<feature type="splice variant" id="VSP_042592" description="In isoform 3." evidence="17">
    <original>S</original>
    <variation>D</variation>
    <location>
        <position position="192"/>
    </location>
</feature>
<feature type="sequence conflict" description="In Ref. 1; BAE35027." evidence="17" ref="1">
    <original>P</original>
    <variation>H</variation>
    <location>
        <position position="871"/>
    </location>
</feature>
<feature type="helix" evidence="22">
    <location>
        <begin position="9"/>
        <end position="19"/>
    </location>
</feature>
<feature type="helix" evidence="22">
    <location>
        <begin position="23"/>
        <end position="37"/>
    </location>
</feature>
<feature type="helix" evidence="22">
    <location>
        <begin position="44"/>
        <end position="53"/>
    </location>
</feature>
<feature type="turn" evidence="22">
    <location>
        <begin position="58"/>
        <end position="60"/>
    </location>
</feature>
<feature type="helix" evidence="22">
    <location>
        <begin position="61"/>
        <end position="71"/>
    </location>
</feature>
<feature type="helix" evidence="22">
    <location>
        <begin position="74"/>
        <end position="79"/>
    </location>
</feature>
<feature type="turn" evidence="22">
    <location>
        <begin position="80"/>
        <end position="84"/>
    </location>
</feature>
<feature type="strand" evidence="22">
    <location>
        <begin position="86"/>
        <end position="90"/>
    </location>
</feature>
<feature type="helix" evidence="22">
    <location>
        <begin position="94"/>
        <end position="105"/>
    </location>
</feature>
<feature type="strand" evidence="22">
    <location>
        <begin position="109"/>
        <end position="115"/>
    </location>
</feature>
<feature type="strand" evidence="22">
    <location>
        <begin position="124"/>
        <end position="126"/>
    </location>
</feature>
<feature type="helix" evidence="22">
    <location>
        <begin position="129"/>
        <end position="136"/>
    </location>
</feature>
<feature type="turn" evidence="22">
    <location>
        <begin position="137"/>
        <end position="139"/>
    </location>
</feature>
<feature type="helix" evidence="22">
    <location>
        <begin position="140"/>
        <end position="143"/>
    </location>
</feature>
<feature type="turn" evidence="22">
    <location>
        <begin position="145"/>
        <end position="148"/>
    </location>
</feature>
<feature type="strand" evidence="22">
    <location>
        <begin position="154"/>
        <end position="156"/>
    </location>
</feature>
<feature type="helix" evidence="22">
    <location>
        <begin position="157"/>
        <end position="170"/>
    </location>
</feature>
<feature type="strand" evidence="22">
    <location>
        <begin position="174"/>
        <end position="178"/>
    </location>
</feature>
<feature type="strand" evidence="22">
    <location>
        <begin position="180"/>
        <end position="185"/>
    </location>
</feature>
<feature type="strand" evidence="22">
    <location>
        <begin position="194"/>
        <end position="200"/>
    </location>
</feature>
<feature type="helix" evidence="22">
    <location>
        <begin position="204"/>
        <end position="207"/>
    </location>
</feature>
<feature type="strand" evidence="22">
    <location>
        <begin position="211"/>
        <end position="216"/>
    </location>
</feature>
<feature type="strand" evidence="22">
    <location>
        <begin position="228"/>
        <end position="233"/>
    </location>
</feature>
<feature type="strand" evidence="22">
    <location>
        <begin position="238"/>
        <end position="245"/>
    </location>
</feature>
<feature type="helix" evidence="22">
    <location>
        <begin position="250"/>
        <end position="253"/>
    </location>
</feature>
<feature type="strand" evidence="24">
    <location>
        <begin position="258"/>
        <end position="262"/>
    </location>
</feature>
<feature type="turn" evidence="21">
    <location>
        <begin position="263"/>
        <end position="266"/>
    </location>
</feature>
<feature type="helix" evidence="22">
    <location>
        <begin position="269"/>
        <end position="277"/>
    </location>
</feature>
<feature type="strand" evidence="22">
    <location>
        <begin position="281"/>
        <end position="298"/>
    </location>
</feature>
<feature type="helix" evidence="22">
    <location>
        <begin position="300"/>
        <end position="305"/>
    </location>
</feature>
<feature type="strand" evidence="22">
    <location>
        <begin position="308"/>
        <end position="311"/>
    </location>
</feature>
<feature type="helix" evidence="22">
    <location>
        <begin position="316"/>
        <end position="319"/>
    </location>
</feature>
<feature type="turn" evidence="22">
    <location>
        <begin position="322"/>
        <end position="324"/>
    </location>
</feature>
<feature type="helix" evidence="22">
    <location>
        <begin position="327"/>
        <end position="341"/>
    </location>
</feature>
<feature type="turn" evidence="22">
    <location>
        <begin position="342"/>
        <end position="346"/>
    </location>
</feature>
<feature type="strand" evidence="22">
    <location>
        <begin position="357"/>
        <end position="359"/>
    </location>
</feature>
<feature type="strand" evidence="22">
    <location>
        <begin position="361"/>
        <end position="365"/>
    </location>
</feature>
<feature type="strand" evidence="22">
    <location>
        <begin position="367"/>
        <end position="373"/>
    </location>
</feature>
<feature type="strand" evidence="22">
    <location>
        <begin position="375"/>
        <end position="381"/>
    </location>
</feature>
<feature type="strand" evidence="22">
    <location>
        <begin position="384"/>
        <end position="390"/>
    </location>
</feature>
<feature type="helix" evidence="22">
    <location>
        <begin position="392"/>
        <end position="394"/>
    </location>
</feature>
<feature type="helix" evidence="22">
    <location>
        <begin position="400"/>
        <end position="402"/>
    </location>
</feature>
<feature type="helix" evidence="22">
    <location>
        <begin position="405"/>
        <end position="424"/>
    </location>
</feature>
<feature type="helix" evidence="22">
    <location>
        <begin position="429"/>
        <end position="440"/>
    </location>
</feature>
<feature type="helix" evidence="22">
    <location>
        <begin position="441"/>
        <end position="445"/>
    </location>
</feature>
<feature type="turn" evidence="22">
    <location>
        <begin position="448"/>
        <end position="450"/>
    </location>
</feature>
<feature type="helix" evidence="22">
    <location>
        <begin position="455"/>
        <end position="457"/>
    </location>
</feature>
<feature type="helix" evidence="22">
    <location>
        <begin position="462"/>
        <end position="464"/>
    </location>
</feature>
<feature type="strand" evidence="22">
    <location>
        <begin position="466"/>
        <end position="468"/>
    </location>
</feature>
<feature type="helix" evidence="22">
    <location>
        <begin position="476"/>
        <end position="482"/>
    </location>
</feature>
<feature type="strand" evidence="22">
    <location>
        <begin position="483"/>
        <end position="485"/>
    </location>
</feature>
<feature type="helix" evidence="23">
    <location>
        <begin position="508"/>
        <end position="520"/>
    </location>
</feature>
<feature type="turn" evidence="23">
    <location>
        <begin position="521"/>
        <end position="523"/>
    </location>
</feature>
<feature type="strand" evidence="23">
    <location>
        <begin position="531"/>
        <end position="533"/>
    </location>
</feature>
<feature type="helix" evidence="23">
    <location>
        <begin position="534"/>
        <end position="536"/>
    </location>
</feature>
<feature type="helix" evidence="23">
    <location>
        <begin position="540"/>
        <end position="549"/>
    </location>
</feature>
<feature type="helix" evidence="23">
    <location>
        <begin position="564"/>
        <end position="579"/>
    </location>
</feature>
<feature type="helix" evidence="23">
    <location>
        <begin position="587"/>
        <end position="592"/>
    </location>
</feature>
<feature type="helix" evidence="23">
    <location>
        <begin position="596"/>
        <end position="610"/>
    </location>
</feature>
<protein>
    <recommendedName>
        <fullName evidence="17">[F-actin]-monooxygenase MICAL1</fullName>
        <ecNumber evidence="13 15">1.14.13.225</ecNumber>
        <ecNumber evidence="4">1.6.3.1</ecNumber>
    </recommendedName>
    <alternativeName>
        <fullName>Molecule interacting with CasL protein 1</fullName>
        <shortName>MICAL-1</shortName>
        <shortName>mMical1</shortName>
    </alternativeName>
    <alternativeName>
        <fullName>NEDD9-interacting protein with calponin homology and LIM domains</fullName>
    </alternativeName>
</protein>
<evidence type="ECO:0000250" key="1"/>
<evidence type="ECO:0000250" key="2">
    <source>
        <dbReference type="UniProtKB" id="D3ZBP4"/>
    </source>
</evidence>
<evidence type="ECO:0000250" key="3">
    <source>
        <dbReference type="UniProtKB" id="Q86BA1"/>
    </source>
</evidence>
<evidence type="ECO:0000250" key="4">
    <source>
        <dbReference type="UniProtKB" id="Q8TDZ2"/>
    </source>
</evidence>
<evidence type="ECO:0000255" key="5"/>
<evidence type="ECO:0000255" key="6">
    <source>
        <dbReference type="PROSITE-ProRule" id="PRU00044"/>
    </source>
</evidence>
<evidence type="ECO:0000255" key="7">
    <source>
        <dbReference type="PROSITE-ProRule" id="PRU00125"/>
    </source>
</evidence>
<evidence type="ECO:0000255" key="8">
    <source>
        <dbReference type="PROSITE-ProRule" id="PRU01195"/>
    </source>
</evidence>
<evidence type="ECO:0000256" key="9">
    <source>
        <dbReference type="SAM" id="MobiDB-lite"/>
    </source>
</evidence>
<evidence type="ECO:0000269" key="10">
    <source>
    </source>
</evidence>
<evidence type="ECO:0000269" key="11">
    <source>
    </source>
</evidence>
<evidence type="ECO:0000269" key="12">
    <source>
    </source>
</evidence>
<evidence type="ECO:0000269" key="13">
    <source>
    </source>
</evidence>
<evidence type="ECO:0000269" key="14">
    <source>
    </source>
</evidence>
<evidence type="ECO:0000269" key="15">
    <source>
    </source>
</evidence>
<evidence type="ECO:0000303" key="16">
    <source>
    </source>
</evidence>
<evidence type="ECO:0000305" key="17"/>
<evidence type="ECO:0007744" key="18">
    <source>
        <dbReference type="PDB" id="4TXI"/>
    </source>
</evidence>
<evidence type="ECO:0007744" key="19">
    <source>
        <dbReference type="PDB" id="4TXK"/>
    </source>
</evidence>
<evidence type="ECO:0007744" key="20">
    <source>
    </source>
</evidence>
<evidence type="ECO:0007829" key="21">
    <source>
        <dbReference type="PDB" id="2BRA"/>
    </source>
</evidence>
<evidence type="ECO:0007829" key="22">
    <source>
        <dbReference type="PDB" id="2BRY"/>
    </source>
</evidence>
<evidence type="ECO:0007829" key="23">
    <source>
        <dbReference type="PDB" id="4TXI"/>
    </source>
</evidence>
<evidence type="ECO:0007829" key="24">
    <source>
        <dbReference type="PDB" id="4TXK"/>
    </source>
</evidence>
<sequence length="1048" mass="116785">MASPASTNPAHDHFETFVQAQLCQDVLSSFQGLCRALGVESGGGLSQYHKIKAQLNYWSAKSLWAKLDKRASQPVYQQGQACTNTKCLVVGAGPCGLRAAVELALLGARVVLVEKRIKFSRHNVLHLWPFTIHDLRALGAKKFYGRFCTGTLDHISIRQLQLLLLKVALLLGVEIHWGVKFTGLQPPPRKGSGWRAQLQPNPPAQLASYEFDVLISAAGGKFVPEGFTIREMRGKLAIGITANFVNGRTVEETQVPEISGVARIYNQKFFQSLLKATGIDLENIVYYKDETHYFVMTAKKQCLLRLGVLRQDLSETDQLLGKANVVPEALQRFARAAADFATHGKLGKLEFAQDARGRPDVAAFDFTSMMRAESSARVQEKHGARLLLGLVGDCLVEPFWPLGTGVARGFLAAFDAAWMVKRWAEGAGPLEVLAERESLYQLLSQTSPENMHRNVAQYGLDPATRYPNLNLRAVTPNQVQDLYDMMDKEHAQRKSDEPDSRKTTTGSAGTEELLHWCQEQTAGFPGVHVTDFSSSWADGLALCALVHHLQPGLLEPSELQGMGALEATTWALRVAEHELGITPVLSAQAVMAGSDPLGLIAYLSHFHSAFKNTSHSSGLVSQPSGTPSAILFLGKLQRSLQRTRAKVDEETPSTEEPPVSEPSMSPNTPELSEHQEAGAEELCELCGKHLYILERFCVDGHFFHRSCFCCHTCEATLWPGGYGQHPGDGHFYCLQHLPQEDQKEADNNGSLESQELPTPGDSNMQPDPSSPPVTRVSPVPSPSQPARRLIRLSSLERLRLSSLNIIPDSGAEPPPKPPRSCSDLARESLKSSFVGWGVPVQAPQVPEAIEKGDDEEEEEEEEEEEEEPLPPLEPELEQTLLTLAKNPGAMTKYPTWRRTLMRRAKEEEMKRFCKAQAIQRRLNEIEATMRELEAEGTKLELALRKESSSPEQQKKLWLDQLLRLIQKKNSLVTEEAELMITVQELDLEEKQRQLDHELRGYMNREETMKTEADLQSENQVLRKLLEVVNQRDALIQFQEERRLREMPA</sequence>
<organism>
    <name type="scientific">Mus musculus</name>
    <name type="common">Mouse</name>
    <dbReference type="NCBI Taxonomy" id="10090"/>
    <lineage>
        <taxon>Eukaryota</taxon>
        <taxon>Metazoa</taxon>
        <taxon>Chordata</taxon>
        <taxon>Craniata</taxon>
        <taxon>Vertebrata</taxon>
        <taxon>Euteleostomi</taxon>
        <taxon>Mammalia</taxon>
        <taxon>Eutheria</taxon>
        <taxon>Euarchontoglires</taxon>
        <taxon>Glires</taxon>
        <taxon>Rodentia</taxon>
        <taxon>Myomorpha</taxon>
        <taxon>Muroidea</taxon>
        <taxon>Muridae</taxon>
        <taxon>Murinae</taxon>
        <taxon>Mus</taxon>
        <taxon>Mus</taxon>
    </lineage>
</organism>
<name>MICA1_MOUSE</name>
<comment type="function">
    <text evidence="4 12 13 14 15">Monooxygenase that promotes depolymerization of F-actin by mediating oxidation of specific methionine residues on actin to form methionine-sulfoxide, resulting in actin filament disassembly and preventing repolymerization. In the absence of actin, it also functions as a NADPH oxidase producing H(2)O(2) (By similarity). Acts as a cytoskeletal regulator that connects NEDD9 to intermediate filaments. Also acts as a negative regulator of apoptosis via its interaction with STK38 and STK38L; acts by antagonizing STK38 and STK38L activation by MST1/STK4. Involved in regulation of lamina-specific connectivity in the nervous system such as the development of lamina-restricted hippocampal connections. Through redox regulation of the actin cytoskeleton controls the intracellular distribution of secretory vesicles containing L1/neurofascin/NgCAM family proteins in neurons, thereby regulating their cell surface levels. May act as Rab effector protein and play a role in vesicle trafficking. Promotes endosomal tubule extension by associating with RAB8 (RAB8A or RAB8B), RAB10 and GRAF (GRAF1/ARHGAP26 or GRAF2/ARHGAP10) on the endosomal membrane which may connect GRAFs to Rabs, thereby participating in neosynthesized Rab8-Rab10-Rab11-dependent protein export (By similarity).</text>
</comment>
<comment type="catalytic activity">
    <reaction evidence="13 15">
        <text>L-methionyl-[F-actin] + NADPH + O2 + H(+) = L-methionyl-(R)-S-oxide-[F-actin] + NADP(+) + H2O</text>
        <dbReference type="Rhea" id="RHEA:51308"/>
        <dbReference type="Rhea" id="RHEA-COMP:12953"/>
        <dbReference type="Rhea" id="RHEA-COMP:12956"/>
        <dbReference type="ChEBI" id="CHEBI:15377"/>
        <dbReference type="ChEBI" id="CHEBI:15378"/>
        <dbReference type="ChEBI" id="CHEBI:15379"/>
        <dbReference type="ChEBI" id="CHEBI:16044"/>
        <dbReference type="ChEBI" id="CHEBI:45764"/>
        <dbReference type="ChEBI" id="CHEBI:57783"/>
        <dbReference type="ChEBI" id="CHEBI:58349"/>
        <dbReference type="EC" id="1.14.13.225"/>
    </reaction>
</comment>
<comment type="catalytic activity">
    <reaction evidence="4">
        <text>NADPH + O2 + H(+) = H2O2 + NADP(+)</text>
        <dbReference type="Rhea" id="RHEA:11260"/>
        <dbReference type="ChEBI" id="CHEBI:15378"/>
        <dbReference type="ChEBI" id="CHEBI:15379"/>
        <dbReference type="ChEBI" id="CHEBI:16240"/>
        <dbReference type="ChEBI" id="CHEBI:57783"/>
        <dbReference type="ChEBI" id="CHEBI:58349"/>
        <dbReference type="EC" id="1.6.3.1"/>
    </reaction>
</comment>
<comment type="cofactor">
    <cofactor evidence="10">
        <name>FAD</name>
        <dbReference type="ChEBI" id="CHEBI:57692"/>
    </cofactor>
</comment>
<comment type="biophysicochemical properties">
    <kinetics>
        <KM evidence="15">9.3 uM for actin (for a monooxygenase domain construct)</KM>
        <KM evidence="15">28.8 uM for NADPH (for a monooxygenase domain construct)</KM>
    </kinetics>
</comment>
<comment type="subunit">
    <text evidence="1 4 10 11 12">Associates with the SH3 domain of NEDD9. Interacts with VIM and PLXNA3. Interacts with RAB1B, RAB8A, RAB10, RAB13 and RAB15 (in their GTP-bound forms); binding to RAB1B is of low affinity compared to other Rab proteins; at least in case of RAB8A and RAB10 can bind 2 molecules of the Rab proteins simultaneously (By similarity). Interacts with STK38 and STK38L. Interacts with GRAF1/ARHGAP26, GRAF2/ARHGAP10, RAB8A, RAB8B and RAB10; may bind simultaneously to GRAFs and Rabs and connects GRAFs to Rabs (By similarity). Does not interact with RAB1 and RAB11A (By similarity).</text>
</comment>
<comment type="interaction">
    <interactant intactId="EBI-4394891">
        <id>Q8VDP3</id>
    </interactant>
    <interactant intactId="EBI-2527046">
        <id>Q91VJ4</id>
        <label>Stk38</label>
    </interactant>
    <organismsDiffer>false</organismsDiffer>
    <experiments>9</experiments>
</comment>
<comment type="interaction">
    <interactant intactId="EBI-4394891">
        <id>Q8VDP3</id>
    </interactant>
    <interactant intactId="EBI-4404035">
        <id>A4GW50</id>
        <label>Stk38l</label>
    </interactant>
    <organismsDiffer>true</organismsDiffer>
    <experiments>2</experiments>
</comment>
<comment type="subcellular location">
    <subcellularLocation>
        <location evidence="4">Cytoplasm</location>
    </subcellularLocation>
    <subcellularLocation>
        <location evidence="4">Cytoplasm</location>
        <location evidence="4">Cytoskeleton</location>
    </subcellularLocation>
    <subcellularLocation>
        <location evidence="4">Endosome membrane</location>
    </subcellularLocation>
    <subcellularLocation>
        <location evidence="4">Midbody</location>
    </subcellularLocation>
</comment>
<comment type="alternative products">
    <event type="alternative splicing"/>
    <isoform>
        <id>Q8VDP3-1</id>
        <name>1</name>
        <sequence type="displayed"/>
    </isoform>
    <isoform>
        <id>Q8VDP3-2</id>
        <name>2</name>
        <sequence type="described" ref="VSP_042591"/>
    </isoform>
    <isoform>
        <id>Q8VDP3-3</id>
        <name>3</name>
        <sequence type="described" ref="VSP_042592"/>
    </isoform>
</comment>
<comment type="tissue specificity">
    <text evidence="14">Expressed in the postnatal and adult hippocampus; found in dentate gyrus, the polymorphic layer, cornu ammonis (CA) 1-3 and in mossy fibers of the striatum lucidum. In adult hippocampus strongly expressed in CA3 pyramidial neurons.</text>
</comment>
<comment type="domain">
    <text>The C-terminal coiled coil part contains the plexin-interacting region.</text>
</comment>
<comment type="domain">
    <text evidence="4">The bivalent Mical/EHBP Rab binding (bMERB) domain, mediates binding to predominantly Rab8, Rab10, Rab13 and Rab15 (in their GTP-bound forms).</text>
</comment>
<comment type="similarity">
    <text evidence="17">Belongs to the Mical family.</text>
</comment>
<comment type="caution">
    <text evidence="3 4 13 15">The reaction mechanism is subject to discussion. Some work suggest MICAL enzymes directly oxidize actin methionine residues to produce methionine-(R)-S-oxide. Other publications suggest that the enzyme functions as a NADPH oxidase producing H(2)O(2) (EC 1.6.3.1) and that it is the produced H(2)O(2) that is responsible for the methionine-(R)-S-oxide production.</text>
</comment>
<dbReference type="EC" id="1.14.13.225" evidence="13 15"/>
<dbReference type="EC" id="1.6.3.1" evidence="4"/>
<dbReference type="EMBL" id="AK159369">
    <property type="protein sequence ID" value="BAE35027.1"/>
    <property type="molecule type" value="mRNA"/>
</dbReference>
<dbReference type="EMBL" id="AK170881">
    <property type="protein sequence ID" value="BAE42090.1"/>
    <property type="molecule type" value="mRNA"/>
</dbReference>
<dbReference type="EMBL" id="AK171234">
    <property type="protein sequence ID" value="BAE42330.1"/>
    <property type="molecule type" value="mRNA"/>
</dbReference>
<dbReference type="EMBL" id="AK171411">
    <property type="protein sequence ID" value="BAE42437.1"/>
    <property type="molecule type" value="mRNA"/>
</dbReference>
<dbReference type="EMBL" id="AK171429">
    <property type="protein sequence ID" value="BAE42447.1"/>
    <property type="molecule type" value="mRNA"/>
</dbReference>
<dbReference type="EMBL" id="AK171479">
    <property type="protein sequence ID" value="BAE42481.1"/>
    <property type="molecule type" value="mRNA"/>
</dbReference>
<dbReference type="EMBL" id="AC153360">
    <property type="status" value="NOT_ANNOTATED_CDS"/>
    <property type="molecule type" value="Genomic_DNA"/>
</dbReference>
<dbReference type="EMBL" id="BC021477">
    <property type="protein sequence ID" value="AAH21477.1"/>
    <property type="molecule type" value="mRNA"/>
</dbReference>
<dbReference type="EMBL" id="BC034682">
    <property type="protein sequence ID" value="AAH34682.1"/>
    <property type="molecule type" value="mRNA"/>
</dbReference>
<dbReference type="CCDS" id="CCDS35888.1">
    <molecule id="Q8VDP3-1"/>
</dbReference>
<dbReference type="CCDS" id="CCDS48547.1">
    <molecule id="Q8VDP3-2"/>
</dbReference>
<dbReference type="RefSeq" id="NP_001157905.1">
    <molecule id="Q8VDP3-2"/>
    <property type="nucleotide sequence ID" value="NM_001164433.1"/>
</dbReference>
<dbReference type="RefSeq" id="NP_612188.1">
    <molecule id="Q8VDP3-1"/>
    <property type="nucleotide sequence ID" value="NM_138315.2"/>
</dbReference>
<dbReference type="RefSeq" id="XP_011241439.1">
    <molecule id="Q8VDP3-1"/>
    <property type="nucleotide sequence ID" value="XM_011243137.4"/>
</dbReference>
<dbReference type="PDB" id="2BRA">
    <property type="method" value="X-ray"/>
    <property type="resolution" value="2.00 A"/>
    <property type="chains" value="A/B=1-484"/>
</dbReference>
<dbReference type="PDB" id="2BRY">
    <property type="method" value="X-ray"/>
    <property type="resolution" value="1.45 A"/>
    <property type="chains" value="A/B=1-489"/>
</dbReference>
<dbReference type="PDB" id="2C4C">
    <property type="method" value="X-ray"/>
    <property type="resolution" value="2.90 A"/>
    <property type="chains" value="A/B=1-489"/>
</dbReference>
<dbReference type="PDB" id="4TXI">
    <property type="method" value="X-ray"/>
    <property type="resolution" value="2.31 A"/>
    <property type="chains" value="A=2-615"/>
</dbReference>
<dbReference type="PDB" id="4TXK">
    <property type="method" value="X-ray"/>
    <property type="resolution" value="2.88 A"/>
    <property type="chains" value="A=2-615"/>
</dbReference>
<dbReference type="PDBsum" id="2BRA"/>
<dbReference type="PDBsum" id="2BRY"/>
<dbReference type="PDBsum" id="2C4C"/>
<dbReference type="PDBsum" id="4TXI"/>
<dbReference type="PDBsum" id="4TXK"/>
<dbReference type="SMR" id="Q8VDP3"/>
<dbReference type="BioGRID" id="228624">
    <property type="interactions" value="12"/>
</dbReference>
<dbReference type="FunCoup" id="Q8VDP3">
    <property type="interactions" value="165"/>
</dbReference>
<dbReference type="IntAct" id="Q8VDP3">
    <property type="interactions" value="4"/>
</dbReference>
<dbReference type="STRING" id="10090.ENSMUSP00000019967"/>
<dbReference type="GlyGen" id="Q8VDP3">
    <property type="glycosylation" value="2 sites"/>
</dbReference>
<dbReference type="iPTMnet" id="Q8VDP3"/>
<dbReference type="PhosphoSitePlus" id="Q8VDP3"/>
<dbReference type="jPOST" id="Q8VDP3"/>
<dbReference type="PaxDb" id="10090-ENSMUSP00000097519"/>
<dbReference type="PeptideAtlas" id="Q8VDP3"/>
<dbReference type="ProteomicsDB" id="295663">
    <molecule id="Q8VDP3-1"/>
</dbReference>
<dbReference type="ProteomicsDB" id="295664">
    <molecule id="Q8VDP3-2"/>
</dbReference>
<dbReference type="ProteomicsDB" id="295665">
    <molecule id="Q8VDP3-3"/>
</dbReference>
<dbReference type="Pumba" id="Q8VDP3"/>
<dbReference type="Antibodypedia" id="32258">
    <property type="antibodies" value="302 antibodies from 24 providers"/>
</dbReference>
<dbReference type="DNASU" id="171580"/>
<dbReference type="Ensembl" id="ENSMUST00000019967.16">
    <molecule id="Q8VDP3-1"/>
    <property type="protein sequence ID" value="ENSMUSP00000019967.10"/>
    <property type="gene ID" value="ENSMUSG00000019823.18"/>
</dbReference>
<dbReference type="Ensembl" id="ENSMUST00000099934.11">
    <molecule id="Q8VDP3-2"/>
    <property type="protein sequence ID" value="ENSMUSP00000097519.5"/>
    <property type="gene ID" value="ENSMUSG00000019823.18"/>
</dbReference>
<dbReference type="Ensembl" id="ENSMUST00000119962.8">
    <molecule id="Q8VDP3-3"/>
    <property type="protein sequence ID" value="ENSMUSP00000113783.2"/>
    <property type="gene ID" value="ENSMUSG00000019823.18"/>
</dbReference>
<dbReference type="GeneID" id="171580"/>
<dbReference type="KEGG" id="mmu:171580"/>
<dbReference type="UCSC" id="uc007exn.2">
    <molecule id="Q8VDP3-1"/>
    <property type="organism name" value="mouse"/>
</dbReference>
<dbReference type="UCSC" id="uc007exp.2">
    <molecule id="Q8VDP3-2"/>
    <property type="organism name" value="mouse"/>
</dbReference>
<dbReference type="AGR" id="MGI:2385847"/>
<dbReference type="CTD" id="64780"/>
<dbReference type="MGI" id="MGI:2385847">
    <property type="gene designation" value="Mical1"/>
</dbReference>
<dbReference type="VEuPathDB" id="HostDB:ENSMUSG00000019823"/>
<dbReference type="eggNOG" id="KOG1700">
    <property type="taxonomic scope" value="Eukaryota"/>
</dbReference>
<dbReference type="GeneTree" id="ENSGT00940000159117"/>
<dbReference type="HOGENOM" id="CLU_000329_0_0_1"/>
<dbReference type="InParanoid" id="Q8VDP3"/>
<dbReference type="OMA" id="APEWKEK"/>
<dbReference type="TreeFam" id="TF324129"/>
<dbReference type="BRENDA" id="1.14.13.225">
    <property type="organism ID" value="3474"/>
</dbReference>
<dbReference type="SABIO-RK" id="Q8VDP3"/>
<dbReference type="BioGRID-ORCS" id="171580">
    <property type="hits" value="1 hit in 76 CRISPR screens"/>
</dbReference>
<dbReference type="ChiTaRS" id="Mical1">
    <property type="organism name" value="mouse"/>
</dbReference>
<dbReference type="EvolutionaryTrace" id="Q8VDP3"/>
<dbReference type="PRO" id="PR:Q8VDP3"/>
<dbReference type="Proteomes" id="UP000000589">
    <property type="component" value="Chromosome 10"/>
</dbReference>
<dbReference type="RNAct" id="Q8VDP3">
    <property type="molecule type" value="protein"/>
</dbReference>
<dbReference type="Bgee" id="ENSMUSG00000019823">
    <property type="expression patterns" value="Expressed in granulocyte and 236 other cell types or tissues"/>
</dbReference>
<dbReference type="ExpressionAtlas" id="Q8VDP3">
    <property type="expression patterns" value="baseline and differential"/>
</dbReference>
<dbReference type="GO" id="GO:0005884">
    <property type="term" value="C:actin filament"/>
    <property type="evidence" value="ECO:0007669"/>
    <property type="project" value="Ensembl"/>
</dbReference>
<dbReference type="GO" id="GO:0036064">
    <property type="term" value="C:ciliary basal body"/>
    <property type="evidence" value="ECO:0007669"/>
    <property type="project" value="Ensembl"/>
</dbReference>
<dbReference type="GO" id="GO:0005737">
    <property type="term" value="C:cytoplasm"/>
    <property type="evidence" value="ECO:0000250"/>
    <property type="project" value="UniProtKB"/>
</dbReference>
<dbReference type="GO" id="GO:0005829">
    <property type="term" value="C:cytosol"/>
    <property type="evidence" value="ECO:0000250"/>
    <property type="project" value="UniProtKB"/>
</dbReference>
<dbReference type="GO" id="GO:0010008">
    <property type="term" value="C:endosome membrane"/>
    <property type="evidence" value="ECO:0000250"/>
    <property type="project" value="UniProtKB"/>
</dbReference>
<dbReference type="GO" id="GO:1990026">
    <property type="term" value="C:hippocampal mossy fiber expansion"/>
    <property type="evidence" value="ECO:0000315"/>
    <property type="project" value="UniProtKB"/>
</dbReference>
<dbReference type="GO" id="GO:0045171">
    <property type="term" value="C:intercellular bridge"/>
    <property type="evidence" value="ECO:0007669"/>
    <property type="project" value="Ensembl"/>
</dbReference>
<dbReference type="GO" id="GO:0030496">
    <property type="term" value="C:midbody"/>
    <property type="evidence" value="ECO:0007669"/>
    <property type="project" value="UniProtKB-SubCell"/>
</dbReference>
<dbReference type="GO" id="GO:0005654">
    <property type="term" value="C:nucleoplasm"/>
    <property type="evidence" value="ECO:0007669"/>
    <property type="project" value="Ensembl"/>
</dbReference>
<dbReference type="GO" id="GO:0005886">
    <property type="term" value="C:plasma membrane"/>
    <property type="evidence" value="ECO:0007669"/>
    <property type="project" value="Ensembl"/>
</dbReference>
<dbReference type="GO" id="GO:0003779">
    <property type="term" value="F:actin binding"/>
    <property type="evidence" value="ECO:0000314"/>
    <property type="project" value="UniProtKB"/>
</dbReference>
<dbReference type="GO" id="GO:0120501">
    <property type="term" value="F:F-actin monooxygenase activity"/>
    <property type="evidence" value="ECO:0007669"/>
    <property type="project" value="UniProtKB-EC"/>
</dbReference>
<dbReference type="GO" id="GO:0071949">
    <property type="term" value="F:FAD binding"/>
    <property type="evidence" value="ECO:0000314"/>
    <property type="project" value="UniProtKB"/>
</dbReference>
<dbReference type="GO" id="GO:0046872">
    <property type="term" value="F:metal ion binding"/>
    <property type="evidence" value="ECO:0007669"/>
    <property type="project" value="UniProtKB-KW"/>
</dbReference>
<dbReference type="GO" id="GO:0004497">
    <property type="term" value="F:monooxygenase activity"/>
    <property type="evidence" value="ECO:0000315"/>
    <property type="project" value="MGI"/>
</dbReference>
<dbReference type="GO" id="GO:0106294">
    <property type="term" value="F:NADPH oxidase H202-forming activity"/>
    <property type="evidence" value="ECO:0007669"/>
    <property type="project" value="RHEA"/>
</dbReference>
<dbReference type="GO" id="GO:0016709">
    <property type="term" value="F:oxidoreductase activity, acting on paired donors, with incorporation or reduction of molecular oxygen, NAD(P)H as one donor, and incorporation of one atom of oxygen"/>
    <property type="evidence" value="ECO:0000314"/>
    <property type="project" value="UniProtKB"/>
</dbReference>
<dbReference type="GO" id="GO:0019901">
    <property type="term" value="F:protein kinase binding"/>
    <property type="evidence" value="ECO:0000314"/>
    <property type="project" value="UniProtKB"/>
</dbReference>
<dbReference type="GO" id="GO:0017124">
    <property type="term" value="F:SH3 domain binding"/>
    <property type="evidence" value="ECO:0000250"/>
    <property type="project" value="UniProtKB"/>
</dbReference>
<dbReference type="GO" id="GO:0031267">
    <property type="term" value="F:small GTPase binding"/>
    <property type="evidence" value="ECO:0000353"/>
    <property type="project" value="UniProtKB"/>
</dbReference>
<dbReference type="GO" id="GO:0030042">
    <property type="term" value="P:actin filament depolymerization"/>
    <property type="evidence" value="ECO:0000314"/>
    <property type="project" value="UniProtKB"/>
</dbReference>
<dbReference type="GO" id="GO:0043066">
    <property type="term" value="P:negative regulation of apoptotic process"/>
    <property type="evidence" value="ECO:0000315"/>
    <property type="project" value="UniProtKB"/>
</dbReference>
<dbReference type="GO" id="GO:1903305">
    <property type="term" value="P:regulation of regulated secretory pathway"/>
    <property type="evidence" value="ECO:0000315"/>
    <property type="project" value="UniProtKB"/>
</dbReference>
<dbReference type="GO" id="GO:0019417">
    <property type="term" value="P:sulfur oxidation"/>
    <property type="evidence" value="ECO:0000314"/>
    <property type="project" value="UniProtKB"/>
</dbReference>
<dbReference type="CDD" id="cd21196">
    <property type="entry name" value="CH_MICAL1"/>
    <property type="match status" value="1"/>
</dbReference>
<dbReference type="CDD" id="cd09358">
    <property type="entry name" value="LIM_Mical_like"/>
    <property type="match status" value="1"/>
</dbReference>
<dbReference type="DisProt" id="DP02723"/>
<dbReference type="FunFam" id="1.10.418.10:FF:000058">
    <property type="entry name" value="F-actin-methionine sulfoxide oxidase MICAL1 isoform X1"/>
    <property type="match status" value="1"/>
</dbReference>
<dbReference type="FunFam" id="2.10.110.10:FF:000106">
    <property type="entry name" value="F-actin-monooxygenase MICAL1 isoform 1"/>
    <property type="match status" value="1"/>
</dbReference>
<dbReference type="FunFam" id="3.50.50.60:FF:000004">
    <property type="entry name" value="protein-methionine sulfoxide oxidase MICAL2 isoform X1"/>
    <property type="match status" value="1"/>
</dbReference>
<dbReference type="Gene3D" id="1.10.418.10">
    <property type="entry name" value="Calponin-like domain"/>
    <property type="match status" value="1"/>
</dbReference>
<dbReference type="Gene3D" id="2.10.110.10">
    <property type="entry name" value="Cysteine Rich Protein"/>
    <property type="match status" value="1"/>
</dbReference>
<dbReference type="Gene3D" id="3.50.50.60">
    <property type="entry name" value="FAD/NAD(P)-binding domain"/>
    <property type="match status" value="1"/>
</dbReference>
<dbReference type="InterPro" id="IPR022735">
    <property type="entry name" value="bMERB_dom"/>
</dbReference>
<dbReference type="InterPro" id="IPR001715">
    <property type="entry name" value="CH_dom"/>
</dbReference>
<dbReference type="InterPro" id="IPR036872">
    <property type="entry name" value="CH_dom_sf"/>
</dbReference>
<dbReference type="InterPro" id="IPR050540">
    <property type="entry name" value="F-actin_Monoox_Mical"/>
</dbReference>
<dbReference type="InterPro" id="IPR002938">
    <property type="entry name" value="FAD-bd"/>
</dbReference>
<dbReference type="InterPro" id="IPR036188">
    <property type="entry name" value="FAD/NAD-bd_sf"/>
</dbReference>
<dbReference type="InterPro" id="IPR001781">
    <property type="entry name" value="Znf_LIM"/>
</dbReference>
<dbReference type="PANTHER" id="PTHR23167:SF35">
    <property type="entry name" value="[F-ACTIN]-MONOOXYGENASE MICAL1"/>
    <property type="match status" value="1"/>
</dbReference>
<dbReference type="PANTHER" id="PTHR23167">
    <property type="entry name" value="CALPONIN HOMOLOGY DOMAIN-CONTAINING PROTEIN DDB_G0272472-RELATED"/>
    <property type="match status" value="1"/>
</dbReference>
<dbReference type="Pfam" id="PF12130">
    <property type="entry name" value="bMERB_dom"/>
    <property type="match status" value="1"/>
</dbReference>
<dbReference type="Pfam" id="PF00307">
    <property type="entry name" value="CH"/>
    <property type="match status" value="1"/>
</dbReference>
<dbReference type="Pfam" id="PF01494">
    <property type="entry name" value="FAD_binding_3"/>
    <property type="match status" value="1"/>
</dbReference>
<dbReference type="Pfam" id="PF25413">
    <property type="entry name" value="Rossman_Mical"/>
    <property type="match status" value="1"/>
</dbReference>
<dbReference type="SMART" id="SM00033">
    <property type="entry name" value="CH"/>
    <property type="match status" value="1"/>
</dbReference>
<dbReference type="SMART" id="SM01203">
    <property type="entry name" value="DUF3585"/>
    <property type="match status" value="1"/>
</dbReference>
<dbReference type="SMART" id="SM00132">
    <property type="entry name" value="LIM"/>
    <property type="match status" value="1"/>
</dbReference>
<dbReference type="SUPFAM" id="SSF47576">
    <property type="entry name" value="Calponin-homology domain, CH-domain"/>
    <property type="match status" value="1"/>
</dbReference>
<dbReference type="SUPFAM" id="SSF51905">
    <property type="entry name" value="FAD/NAD(P)-binding domain"/>
    <property type="match status" value="1"/>
</dbReference>
<dbReference type="SUPFAM" id="SSF57716">
    <property type="entry name" value="Glucocorticoid receptor-like (DNA-binding domain)"/>
    <property type="match status" value="2"/>
</dbReference>
<dbReference type="PROSITE" id="PS51848">
    <property type="entry name" value="BMERB"/>
    <property type="match status" value="1"/>
</dbReference>
<dbReference type="PROSITE" id="PS50021">
    <property type="entry name" value="CH"/>
    <property type="match status" value="1"/>
</dbReference>
<dbReference type="PROSITE" id="PS00478">
    <property type="entry name" value="LIM_DOMAIN_1"/>
    <property type="match status" value="1"/>
</dbReference>
<dbReference type="PROSITE" id="PS50023">
    <property type="entry name" value="LIM_DOMAIN_2"/>
    <property type="match status" value="1"/>
</dbReference>
<keyword id="KW-0002">3D-structure</keyword>
<keyword id="KW-0009">Actin-binding</keyword>
<keyword id="KW-0025">Alternative splicing</keyword>
<keyword id="KW-0175">Coiled coil</keyword>
<keyword id="KW-0963">Cytoplasm</keyword>
<keyword id="KW-0206">Cytoskeleton</keyword>
<keyword id="KW-0967">Endosome</keyword>
<keyword id="KW-0274">FAD</keyword>
<keyword id="KW-0285">Flavoprotein</keyword>
<keyword id="KW-0440">LIM domain</keyword>
<keyword id="KW-0472">Membrane</keyword>
<keyword id="KW-0479">Metal-binding</keyword>
<keyword id="KW-0503">Monooxygenase</keyword>
<keyword id="KW-0521">NADP</keyword>
<keyword id="KW-0560">Oxidoreductase</keyword>
<keyword id="KW-0597">Phosphoprotein</keyword>
<keyword id="KW-1185">Reference proteome</keyword>
<keyword id="KW-0862">Zinc</keyword>
<accession>Q8VDP3</accession>
<accession>D3Z4C6</accession>
<accession>E9PXR1</accession>
<accession>Q3TB77</accession>
<accession>Q3TBH9</accession>
<accession>Q3TX89</accession>
<proteinExistence type="evidence at protein level"/>
<gene>
    <name type="primary">Mical1</name>
    <name type="synonym">Mical</name>
    <name type="synonym">Nical</name>
</gene>